<dbReference type="EC" id="2.5.1.145" evidence="1"/>
<dbReference type="EMBL" id="CP000233">
    <property type="protein sequence ID" value="ABD99985.1"/>
    <property type="molecule type" value="Genomic_DNA"/>
</dbReference>
<dbReference type="RefSeq" id="WP_003700630.1">
    <property type="nucleotide sequence ID" value="NC_007929.1"/>
</dbReference>
<dbReference type="RefSeq" id="YP_536068.1">
    <property type="nucleotide sequence ID" value="NC_007929.1"/>
</dbReference>
<dbReference type="SMR" id="Q1WSX7"/>
<dbReference type="STRING" id="362948.LSL_1177"/>
<dbReference type="GeneID" id="89465923"/>
<dbReference type="KEGG" id="lsl:LSL_1177"/>
<dbReference type="PATRIC" id="fig|362948.14.peg.1251"/>
<dbReference type="HOGENOM" id="CLU_013386_0_1_9"/>
<dbReference type="OrthoDB" id="871140at2"/>
<dbReference type="UniPathway" id="UPA00664"/>
<dbReference type="Proteomes" id="UP000006559">
    <property type="component" value="Chromosome"/>
</dbReference>
<dbReference type="GO" id="GO:0005886">
    <property type="term" value="C:plasma membrane"/>
    <property type="evidence" value="ECO:0007669"/>
    <property type="project" value="UniProtKB-SubCell"/>
</dbReference>
<dbReference type="GO" id="GO:0008961">
    <property type="term" value="F:phosphatidylglycerol-prolipoprotein diacylglyceryl transferase activity"/>
    <property type="evidence" value="ECO:0007669"/>
    <property type="project" value="UniProtKB-UniRule"/>
</dbReference>
<dbReference type="GO" id="GO:0042158">
    <property type="term" value="P:lipoprotein biosynthetic process"/>
    <property type="evidence" value="ECO:0007669"/>
    <property type="project" value="UniProtKB-UniRule"/>
</dbReference>
<dbReference type="HAMAP" id="MF_01147">
    <property type="entry name" value="Lgt"/>
    <property type="match status" value="1"/>
</dbReference>
<dbReference type="InterPro" id="IPR001640">
    <property type="entry name" value="Lgt"/>
</dbReference>
<dbReference type="NCBIfam" id="TIGR00544">
    <property type="entry name" value="lgt"/>
    <property type="match status" value="1"/>
</dbReference>
<dbReference type="PANTHER" id="PTHR30589:SF0">
    <property type="entry name" value="PHOSPHATIDYLGLYCEROL--PROLIPOPROTEIN DIACYLGLYCERYL TRANSFERASE"/>
    <property type="match status" value="1"/>
</dbReference>
<dbReference type="PANTHER" id="PTHR30589">
    <property type="entry name" value="PROLIPOPROTEIN DIACYLGLYCERYL TRANSFERASE"/>
    <property type="match status" value="1"/>
</dbReference>
<dbReference type="Pfam" id="PF01790">
    <property type="entry name" value="LGT"/>
    <property type="match status" value="1"/>
</dbReference>
<dbReference type="PROSITE" id="PS01311">
    <property type="entry name" value="LGT"/>
    <property type="match status" value="1"/>
</dbReference>
<gene>
    <name evidence="1" type="primary">lgt</name>
    <name type="ordered locus">LSL_1177</name>
</gene>
<keyword id="KW-1003">Cell membrane</keyword>
<keyword id="KW-0472">Membrane</keyword>
<keyword id="KW-1185">Reference proteome</keyword>
<keyword id="KW-0808">Transferase</keyword>
<keyword id="KW-0812">Transmembrane</keyword>
<keyword id="KW-1133">Transmembrane helix</keyword>
<comment type="function">
    <text evidence="1">Catalyzes the transfer of the diacylglyceryl group from phosphatidylglycerol to the sulfhydryl group of the N-terminal cysteine of a prolipoprotein, the first step in the formation of mature lipoproteins.</text>
</comment>
<comment type="catalytic activity">
    <reaction evidence="1">
        <text>L-cysteinyl-[prolipoprotein] + a 1,2-diacyl-sn-glycero-3-phospho-(1'-sn-glycerol) = an S-1,2-diacyl-sn-glyceryl-L-cysteinyl-[prolipoprotein] + sn-glycerol 1-phosphate + H(+)</text>
        <dbReference type="Rhea" id="RHEA:56712"/>
        <dbReference type="Rhea" id="RHEA-COMP:14679"/>
        <dbReference type="Rhea" id="RHEA-COMP:14680"/>
        <dbReference type="ChEBI" id="CHEBI:15378"/>
        <dbReference type="ChEBI" id="CHEBI:29950"/>
        <dbReference type="ChEBI" id="CHEBI:57685"/>
        <dbReference type="ChEBI" id="CHEBI:64716"/>
        <dbReference type="ChEBI" id="CHEBI:140658"/>
        <dbReference type="EC" id="2.5.1.145"/>
    </reaction>
</comment>
<comment type="pathway">
    <text evidence="1">Protein modification; lipoprotein biosynthesis (diacylglyceryl transfer).</text>
</comment>
<comment type="subcellular location">
    <subcellularLocation>
        <location evidence="1">Cell membrane</location>
        <topology evidence="1">Multi-pass membrane protein</topology>
    </subcellularLocation>
</comment>
<comment type="similarity">
    <text evidence="1">Belongs to the Lgt family.</text>
</comment>
<accession>Q1WSX7</accession>
<protein>
    <recommendedName>
        <fullName evidence="1">Phosphatidylglycerol--prolipoprotein diacylglyceryl transferase</fullName>
        <ecNumber evidence="1">2.5.1.145</ecNumber>
    </recommendedName>
</protein>
<evidence type="ECO:0000255" key="1">
    <source>
        <dbReference type="HAMAP-Rule" id="MF_01147"/>
    </source>
</evidence>
<sequence length="269" mass="31064">MNFLGVINPVALQLGPFQIRWYGIIIASAVILAVYLSVLEGRKQNILDDDIYDLLLYSLPVAIICARIYYVVFEWSYYSHHLSETYRIWDGGIAIYGALIGAVIVILIFCRRRNIPTWTLLDVIAPTVILAQGIGRWGNFMNQEAHGVATTLGFLKSLHLPKFIINQMYIDGTYYQPTFLYESLWDISGFVVLIILRRQKKLLKSGEVVLSYIIWYSFGRFFIEGMRTDSLMLGSLRVSQWLSLILFISAIAAIFYRRYNDPLLKWYTE</sequence>
<proteinExistence type="inferred from homology"/>
<reference key="1">
    <citation type="journal article" date="2006" name="Proc. Natl. Acad. Sci. U.S.A.">
        <title>Multireplicon genome architecture of Lactobacillus salivarius.</title>
        <authorList>
            <person name="Claesson M.J."/>
            <person name="Li Y."/>
            <person name="Leahy S."/>
            <person name="Canchaya C."/>
            <person name="van Pijkeren J.P."/>
            <person name="Cerdeno-Tarraga A.M."/>
            <person name="Parkhill J."/>
            <person name="Flynn S."/>
            <person name="O'Sullivan G.C."/>
            <person name="Collins J.K."/>
            <person name="Higgins D."/>
            <person name="Shanahan F."/>
            <person name="Fitzgerald G.F."/>
            <person name="van Sinderen D."/>
            <person name="O'Toole P.W."/>
        </authorList>
    </citation>
    <scope>NUCLEOTIDE SEQUENCE [LARGE SCALE GENOMIC DNA]</scope>
    <source>
        <strain>UCC118</strain>
    </source>
</reference>
<name>LGT_LIGS1</name>
<organism>
    <name type="scientific">Ligilactobacillus salivarius (strain UCC118)</name>
    <name type="common">Lactobacillus salivarius</name>
    <dbReference type="NCBI Taxonomy" id="362948"/>
    <lineage>
        <taxon>Bacteria</taxon>
        <taxon>Bacillati</taxon>
        <taxon>Bacillota</taxon>
        <taxon>Bacilli</taxon>
        <taxon>Lactobacillales</taxon>
        <taxon>Lactobacillaceae</taxon>
        <taxon>Ligilactobacillus</taxon>
    </lineage>
</organism>
<feature type="chain" id="PRO_1000065478" description="Phosphatidylglycerol--prolipoprotein diacylglyceryl transferase">
    <location>
        <begin position="1"/>
        <end position="269"/>
    </location>
</feature>
<feature type="transmembrane region" description="Helical" evidence="1">
    <location>
        <begin position="21"/>
        <end position="41"/>
    </location>
</feature>
<feature type="transmembrane region" description="Helical" evidence="1">
    <location>
        <begin position="54"/>
        <end position="74"/>
    </location>
</feature>
<feature type="transmembrane region" description="Helical" evidence="1">
    <location>
        <begin position="88"/>
        <end position="108"/>
    </location>
</feature>
<feature type="transmembrane region" description="Helical" evidence="1">
    <location>
        <begin position="206"/>
        <end position="226"/>
    </location>
</feature>
<feature type="transmembrane region" description="Helical" evidence="1">
    <location>
        <begin position="236"/>
        <end position="256"/>
    </location>
</feature>
<feature type="binding site" evidence="1">
    <location>
        <position position="136"/>
    </location>
    <ligand>
        <name>a 1,2-diacyl-sn-glycero-3-phospho-(1'-sn-glycerol)</name>
        <dbReference type="ChEBI" id="CHEBI:64716"/>
    </ligand>
</feature>